<evidence type="ECO:0000250" key="1">
    <source>
        <dbReference type="UniProtKB" id="P0DTC9"/>
    </source>
</evidence>
<evidence type="ECO:0000255" key="2">
    <source>
        <dbReference type="HAMAP-Rule" id="MF_04096"/>
    </source>
</evidence>
<evidence type="ECO:0000255" key="3">
    <source>
        <dbReference type="PROSITE-ProRule" id="PRU01276"/>
    </source>
</evidence>
<evidence type="ECO:0000255" key="4">
    <source>
        <dbReference type="PROSITE-ProRule" id="PRU01277"/>
    </source>
</evidence>
<evidence type="ECO:0000256" key="5">
    <source>
        <dbReference type="SAM" id="MobiDB-lite"/>
    </source>
</evidence>
<organismHost>
    <name type="scientific">Puffinus puffinus</name>
    <name type="common">Manx shearwater</name>
    <dbReference type="NCBI Taxonomy" id="48688"/>
</organismHost>
<name>NCAP_CVPV</name>
<feature type="chain" id="PRO_0000106022" description="Nucleoprotein">
    <location>
        <begin position="1"/>
        <end position="457"/>
    </location>
</feature>
<feature type="domain" description="CoV N NTD" evidence="3">
    <location>
        <begin position="64"/>
        <end position="193"/>
    </location>
</feature>
<feature type="domain" description="CoV N CTD" evidence="4">
    <location>
        <begin position="260"/>
        <end position="383"/>
    </location>
</feature>
<feature type="region of interest" description="Disordered" evidence="5">
    <location>
        <begin position="1"/>
        <end position="62"/>
    </location>
</feature>
<feature type="region of interest" description="RNA-binding" evidence="2">
    <location>
        <begin position="56"/>
        <end position="197"/>
    </location>
</feature>
<feature type="region of interest" description="Disordered" evidence="5">
    <location>
        <begin position="158"/>
        <end position="178"/>
    </location>
</feature>
<feature type="region of interest" description="Disordered" evidence="5">
    <location>
        <begin position="190"/>
        <end position="228"/>
    </location>
</feature>
<feature type="region of interest" description="Disordered" evidence="5">
    <location>
        <begin position="249"/>
        <end position="290"/>
    </location>
</feature>
<feature type="region of interest" description="Dimerization" evidence="2">
    <location>
        <begin position="267"/>
        <end position="384"/>
    </location>
</feature>
<feature type="region of interest" description="Disordered" evidence="5">
    <location>
        <begin position="382"/>
        <end position="429"/>
    </location>
</feature>
<feature type="compositionally biased region" description="Low complexity" evidence="5">
    <location>
        <begin position="9"/>
        <end position="23"/>
    </location>
</feature>
<feature type="compositionally biased region" description="Polar residues" evidence="5">
    <location>
        <begin position="49"/>
        <end position="61"/>
    </location>
</feature>
<feature type="compositionally biased region" description="Low complexity" evidence="5">
    <location>
        <begin position="193"/>
        <end position="212"/>
    </location>
</feature>
<feature type="compositionally biased region" description="Polar residues" evidence="5">
    <location>
        <begin position="215"/>
        <end position="225"/>
    </location>
</feature>
<feature type="compositionally biased region" description="Basic residues" evidence="5">
    <location>
        <begin position="267"/>
        <end position="277"/>
    </location>
</feature>
<feature type="binding site" evidence="1">
    <location>
        <position position="109"/>
    </location>
    <ligand>
        <name>RNA</name>
        <dbReference type="ChEBI" id="CHEBI:33697"/>
    </ligand>
</feature>
<feature type="binding site" evidence="1">
    <location>
        <position position="125"/>
    </location>
    <ligand>
        <name>RNA</name>
        <dbReference type="ChEBI" id="CHEBI:33697"/>
    </ligand>
</feature>
<feature type="binding site" evidence="1">
    <location>
        <position position="167"/>
    </location>
    <ligand>
        <name>RNA</name>
        <dbReference type="ChEBI" id="CHEBI:33697"/>
    </ligand>
</feature>
<feature type="modified residue" description="Phosphoserine; by host" evidence="2">
    <location>
        <position position="170"/>
    </location>
</feature>
<feature type="modified residue" description="Phosphothreonine; by host" evidence="2">
    <location>
        <position position="177"/>
    </location>
</feature>
<feature type="modified residue" description="Phosphoserine; by host" evidence="2">
    <location>
        <position position="194"/>
    </location>
</feature>
<feature type="modified residue" description="Phosphoserine; by host" evidence="2">
    <location>
        <position position="390"/>
    </location>
</feature>
<feature type="modified residue" description="Phosphothreonine; by host" evidence="2">
    <location>
        <position position="431"/>
    </location>
</feature>
<organism>
    <name type="scientific">Puffinosis coronavirus</name>
    <name type="common">PV</name>
    <name type="synonym">Puffinosis virus</name>
    <dbReference type="NCBI Taxonomy" id="76583"/>
    <lineage>
        <taxon>Viruses</taxon>
        <taxon>Riboviria</taxon>
        <taxon>Orthornavirae</taxon>
        <taxon>Pisuviricota</taxon>
        <taxon>Pisoniviricetes</taxon>
        <taxon>Nidovirales</taxon>
        <taxon>Cornidovirineae</taxon>
        <taxon>Coronaviridae</taxon>
        <taxon>Orthocoronavirinae</taxon>
        <taxon>Betacoronavirus</taxon>
        <taxon>Embecovirus</taxon>
        <taxon>Murine coronavirus</taxon>
    </lineage>
</organism>
<keyword id="KW-0013">ADP-ribosylation</keyword>
<keyword id="KW-1040">Host Golgi apparatus</keyword>
<keyword id="KW-0597">Phosphoprotein</keyword>
<keyword id="KW-0687">Ribonucleoprotein</keyword>
<keyword id="KW-0694">RNA-binding</keyword>
<keyword id="KW-0804">Transcription</keyword>
<keyword id="KW-0805">Transcription regulation</keyword>
<keyword id="KW-0543">Viral nucleoprotein</keyword>
<keyword id="KW-0946">Virion</keyword>
<accession>P59713</accession>
<comment type="function">
    <text evidence="2">Packages the positive strand viral genome RNA into a helical ribonucleocapsid (RNP) and plays a fundamental role during virion assembly through its interactions with the viral genome and membrane protein M. Plays an important role in enhancing the efficiency of subgenomic viral RNA transcription as well as viral replication.</text>
</comment>
<comment type="subunit">
    <text evidence="2">Homooligomer. Both monomeric and oligomeric forms interact with RNA. Interacts with protein M. Interacts with NSP3; this interaction serves to tether the genome to the newly translated replicase-transcriptase complex at a very early stage of infection.</text>
</comment>
<comment type="subcellular location">
    <subcellularLocation>
        <location evidence="2">Virion</location>
    </subcellularLocation>
    <subcellularLocation>
        <location evidence="2">Host endoplasmic reticulum-Golgi intermediate compartment</location>
    </subcellularLocation>
    <subcellularLocation>
        <location evidence="2">Host Golgi apparatus</location>
    </subcellularLocation>
    <text evidence="2">Located inside the virion, complexed with the viral RNA. Probably associates with ER-derived membranes where it participates in viral RNA synthesis and virus budding.</text>
</comment>
<comment type="PTM">
    <text evidence="2">ADP-ribosylated. The ADP-ribosylation is retained in the virion during infection.</text>
</comment>
<comment type="PTM">
    <text evidence="2">Phosphorylated on serine and threonine residues.</text>
</comment>
<comment type="similarity">
    <text evidence="2">Belongs to the betacoronavirus nucleocapsid protein family.</text>
</comment>
<reference key="1">
    <citation type="submission" date="2003-02" db="EMBL/GenBank/DDBJ databases">
        <title>Common RNA replication signals exist among group 2 coronaviruses despite two clusters of 5' and 3'UTR sequence patterns.</title>
        <authorList>
            <person name="Wu H.Y."/>
            <person name="Guy J.S."/>
            <person name="Yoo D."/>
            <person name="Vlasak R."/>
            <person name="Urbach E."/>
            <person name="Brian D.A."/>
        </authorList>
    </citation>
    <scope>NUCLEOTIDE SEQUENCE [MRNA]</scope>
</reference>
<dbReference type="EMBL" id="AJ544718">
    <property type="protein sequence ID" value="CAD67607.1"/>
    <property type="molecule type" value="mRNA"/>
</dbReference>
<dbReference type="SMR" id="P59713"/>
<dbReference type="GO" id="GO:0044172">
    <property type="term" value="C:host cell endoplasmic reticulum-Golgi intermediate compartment"/>
    <property type="evidence" value="ECO:0007669"/>
    <property type="project" value="UniProtKB-SubCell"/>
</dbReference>
<dbReference type="GO" id="GO:0044177">
    <property type="term" value="C:host cell Golgi apparatus"/>
    <property type="evidence" value="ECO:0007669"/>
    <property type="project" value="UniProtKB-SubCell"/>
</dbReference>
<dbReference type="GO" id="GO:1990904">
    <property type="term" value="C:ribonucleoprotein complex"/>
    <property type="evidence" value="ECO:0007669"/>
    <property type="project" value="UniProtKB-KW"/>
</dbReference>
<dbReference type="GO" id="GO:0019013">
    <property type="term" value="C:viral nucleocapsid"/>
    <property type="evidence" value="ECO:0007669"/>
    <property type="project" value="UniProtKB-UniRule"/>
</dbReference>
<dbReference type="GO" id="GO:0003723">
    <property type="term" value="F:RNA binding"/>
    <property type="evidence" value="ECO:0007669"/>
    <property type="project" value="UniProtKB-UniRule"/>
</dbReference>
<dbReference type="CDD" id="cd21595">
    <property type="entry name" value="CoV_N-CTD"/>
    <property type="match status" value="1"/>
</dbReference>
<dbReference type="CDD" id="cd21554">
    <property type="entry name" value="CoV_N-NTD"/>
    <property type="match status" value="1"/>
</dbReference>
<dbReference type="HAMAP" id="MF_04096">
    <property type="entry name" value="BETA_CORONA_NCAP"/>
    <property type="match status" value="1"/>
</dbReference>
<dbReference type="InterPro" id="IPR044344">
    <property type="entry name" value="N_prot_C_CoV"/>
</dbReference>
<dbReference type="InterPro" id="IPR044345">
    <property type="entry name" value="N_prot_N_CoV"/>
</dbReference>
<dbReference type="InterPro" id="IPR043505">
    <property type="entry name" value="NCAP_bCoV"/>
</dbReference>
<dbReference type="InterPro" id="IPR001218">
    <property type="entry name" value="Nucleocap_CoV"/>
</dbReference>
<dbReference type="InterPro" id="IPR037179">
    <property type="entry name" value="Nucleocapsid_C"/>
</dbReference>
<dbReference type="InterPro" id="IPR037195">
    <property type="entry name" value="Nucleocapsid_N"/>
</dbReference>
<dbReference type="Pfam" id="PF00937">
    <property type="entry name" value="CoV_nucleocap"/>
    <property type="match status" value="1"/>
</dbReference>
<dbReference type="PIRSF" id="PIRSF003888">
    <property type="entry name" value="Corona_nucleocap"/>
    <property type="match status" value="1"/>
</dbReference>
<dbReference type="SUPFAM" id="SSF110304">
    <property type="entry name" value="Coronavirus RNA-binding domain"/>
    <property type="match status" value="1"/>
</dbReference>
<dbReference type="SUPFAM" id="SSF103068">
    <property type="entry name" value="Nucleocapsid protein dimerization domain"/>
    <property type="match status" value="1"/>
</dbReference>
<dbReference type="PROSITE" id="PS51929">
    <property type="entry name" value="COV_N_CTD"/>
    <property type="match status" value="1"/>
</dbReference>
<dbReference type="PROSITE" id="PS51928">
    <property type="entry name" value="COV_N_NTD"/>
    <property type="match status" value="1"/>
</dbReference>
<proteinExistence type="evidence at transcript level"/>
<protein>
    <recommendedName>
        <fullName evidence="2">Nucleoprotein</fullName>
    </recommendedName>
    <alternativeName>
        <fullName evidence="2">Nucleocapsid protein</fullName>
        <shortName evidence="2">NC</shortName>
        <shortName evidence="2">Protein N</shortName>
    </alternativeName>
</protein>
<sequence>MSFVPGQENAGSRSSSGNRAGNGILKKTTWADQTERGSNNQNRGRRNQPKQTATTQPNSGSVVPHYSWFSGITQFQKGKEFKFAEGQGVPIANGIPATEQKGYWFRHNRRSFKSPDGQQKQLLPRWYFYYLGTGPYAGAEYGDDVEGVCWVANKQADTRTSADIAERDPSSHEAIPTRFAPGTFLPQGYYVEGSGRSAPASRSGSRSQSRGPNNRARSSSNQRQPASIVKPDMAEEIAALVLAKLGKDAGQPKQVTKQSAKEVRQKILNKPRQKRTPNKQCPVQQCFGKRGPNQNFGGPEMLKLGTSDPQFPILAELAPTAGAFFFGSKLELVKKNSVGVDEPTKDVYELQYSGAVRFDSTLPGFETIMKVLRENLNAYQNQDGGADVVSPKPQRKRGQRQVAQKKNDEVDNVSVAKPKSAVQRNVNRELTPEDRSLLAQILDDGVVPDGLEDDSNV</sequence>
<gene>
    <name evidence="2" type="primary">N</name>
</gene>